<comment type="function">
    <text evidence="1">Catalyzes quinol oxidation with the concomitant reduction of oxygen to water.</text>
</comment>
<comment type="catalytic activity">
    <reaction>
        <text>2 a quinol + O2 = 2 a quinone + 2 H2O</text>
        <dbReference type="Rhea" id="RHEA:55376"/>
        <dbReference type="ChEBI" id="CHEBI:15377"/>
        <dbReference type="ChEBI" id="CHEBI:15379"/>
        <dbReference type="ChEBI" id="CHEBI:24646"/>
        <dbReference type="ChEBI" id="CHEBI:132124"/>
    </reaction>
</comment>
<comment type="subcellular location">
    <subcellularLocation>
        <location evidence="1">Cell membrane</location>
        <topology evidence="1">Multi-pass membrane protein</topology>
    </subcellularLocation>
</comment>
<comment type="similarity">
    <text evidence="3">Belongs to the cytochrome c oxidase bacterial subunit 4 family.</text>
</comment>
<comment type="sequence caution" evidence="3">
    <conflict type="erroneous initiation">
        <sequence resource="EMBL-CDS" id="ABD21773"/>
    </conflict>
</comment>
<accession>Q2FI20</accession>
<name>QOX4_STAA3</name>
<proteinExistence type="inferred from homology"/>
<keyword id="KW-1003">Cell membrane</keyword>
<keyword id="KW-0472">Membrane</keyword>
<keyword id="KW-0560">Oxidoreductase</keyword>
<keyword id="KW-0812">Transmembrane</keyword>
<keyword id="KW-1133">Transmembrane helix</keyword>
<evidence type="ECO:0000250" key="1"/>
<evidence type="ECO:0000255" key="2"/>
<evidence type="ECO:0000305" key="3"/>
<gene>
    <name type="primary">qoxD</name>
    <name type="ordered locus">SAUSA300_0960</name>
</gene>
<reference key="1">
    <citation type="journal article" date="2006" name="Lancet">
        <title>Complete genome sequence of USA300, an epidemic clone of community-acquired meticillin-resistant Staphylococcus aureus.</title>
        <authorList>
            <person name="Diep B.A."/>
            <person name="Gill S.R."/>
            <person name="Chang R.F."/>
            <person name="Phan T.H."/>
            <person name="Chen J.H."/>
            <person name="Davidson M.G."/>
            <person name="Lin F."/>
            <person name="Lin J."/>
            <person name="Carleton H.A."/>
            <person name="Mongodin E.F."/>
            <person name="Sensabaugh G.F."/>
            <person name="Perdreau-Remington F."/>
        </authorList>
    </citation>
    <scope>NUCLEOTIDE SEQUENCE [LARGE SCALE GENOMIC DNA]</scope>
    <source>
        <strain>USA300</strain>
    </source>
</reference>
<sequence length="96" mass="10687">MSTIMKHTVGFIASIVLTLLAVYVTLYTSLTFHAKLTIIFGFAFVQAGLQLLMFMHLTEGKDGRLQTFKVIFALVITLCFVVGTYWVMQGGHSSHL</sequence>
<feature type="chain" id="PRO_0000275865" description="Probable quinol oxidase subunit 4">
    <location>
        <begin position="1"/>
        <end position="96"/>
    </location>
</feature>
<feature type="transmembrane region" description="Helical" evidence="2">
    <location>
        <begin position="8"/>
        <end position="28"/>
    </location>
</feature>
<feature type="transmembrane region" description="Helical" evidence="2">
    <location>
        <begin position="36"/>
        <end position="56"/>
    </location>
</feature>
<feature type="transmembrane region" description="Helical" evidence="2">
    <location>
        <begin position="68"/>
        <end position="88"/>
    </location>
</feature>
<protein>
    <recommendedName>
        <fullName>Probable quinol oxidase subunit 4</fullName>
        <ecNumber>1.10.3.-</ecNumber>
    </recommendedName>
    <alternativeName>
        <fullName>Quinol oxidase polypeptide IV</fullName>
    </alternativeName>
</protein>
<organism>
    <name type="scientific">Staphylococcus aureus (strain USA300)</name>
    <dbReference type="NCBI Taxonomy" id="367830"/>
    <lineage>
        <taxon>Bacteria</taxon>
        <taxon>Bacillati</taxon>
        <taxon>Bacillota</taxon>
        <taxon>Bacilli</taxon>
        <taxon>Bacillales</taxon>
        <taxon>Staphylococcaceae</taxon>
        <taxon>Staphylococcus</taxon>
    </lineage>
</organism>
<dbReference type="EC" id="1.10.3.-"/>
<dbReference type="EMBL" id="CP000255">
    <property type="protein sequence ID" value="ABD21773.1"/>
    <property type="status" value="ALT_INIT"/>
    <property type="molecule type" value="Genomic_DNA"/>
</dbReference>
<dbReference type="SMR" id="Q2FI20"/>
<dbReference type="KEGG" id="saa:SAUSA300_0960"/>
<dbReference type="HOGENOM" id="CLU_140945_2_0_9"/>
<dbReference type="OMA" id="FAFIQMT"/>
<dbReference type="Proteomes" id="UP000001939">
    <property type="component" value="Chromosome"/>
</dbReference>
<dbReference type="GO" id="GO:0009319">
    <property type="term" value="C:cytochrome o ubiquinol oxidase complex"/>
    <property type="evidence" value="ECO:0007669"/>
    <property type="project" value="TreeGrafter"/>
</dbReference>
<dbReference type="GO" id="GO:0005886">
    <property type="term" value="C:plasma membrane"/>
    <property type="evidence" value="ECO:0007669"/>
    <property type="project" value="UniProtKB-SubCell"/>
</dbReference>
<dbReference type="GO" id="GO:0009486">
    <property type="term" value="F:cytochrome bo3 ubiquinol oxidase activity"/>
    <property type="evidence" value="ECO:0007669"/>
    <property type="project" value="TreeGrafter"/>
</dbReference>
<dbReference type="GO" id="GO:0016682">
    <property type="term" value="F:oxidoreductase activity, acting on diphenols and related substances as donors, oxygen as acceptor"/>
    <property type="evidence" value="ECO:0007669"/>
    <property type="project" value="InterPro"/>
</dbReference>
<dbReference type="GO" id="GO:0015078">
    <property type="term" value="F:proton transmembrane transporter activity"/>
    <property type="evidence" value="ECO:0007669"/>
    <property type="project" value="TreeGrafter"/>
</dbReference>
<dbReference type="GO" id="GO:0019646">
    <property type="term" value="P:aerobic electron transport chain"/>
    <property type="evidence" value="ECO:0007669"/>
    <property type="project" value="TreeGrafter"/>
</dbReference>
<dbReference type="GO" id="GO:0042773">
    <property type="term" value="P:ATP synthesis coupled electron transport"/>
    <property type="evidence" value="ECO:0007669"/>
    <property type="project" value="InterPro"/>
</dbReference>
<dbReference type="GO" id="GO:0015990">
    <property type="term" value="P:electron transport coupled proton transport"/>
    <property type="evidence" value="ECO:0007669"/>
    <property type="project" value="TreeGrafter"/>
</dbReference>
<dbReference type="InterPro" id="IPR005171">
    <property type="entry name" value="Cyt_c_oxidase_su4_prok"/>
</dbReference>
<dbReference type="InterPro" id="IPR050968">
    <property type="entry name" value="Cytochrome_c_oxidase_bac_sub4"/>
</dbReference>
<dbReference type="InterPro" id="IPR014250">
    <property type="entry name" value="QoxD"/>
</dbReference>
<dbReference type="NCBIfam" id="TIGR02901">
    <property type="entry name" value="QoxD"/>
    <property type="match status" value="1"/>
</dbReference>
<dbReference type="PANTHER" id="PTHR36835">
    <property type="entry name" value="CYTOCHROME BO(3) UBIQUINOL OXIDASE SUBUNIT 4"/>
    <property type="match status" value="1"/>
</dbReference>
<dbReference type="PANTHER" id="PTHR36835:SF1">
    <property type="entry name" value="CYTOCHROME BO(3) UBIQUINOL OXIDASE SUBUNIT 4"/>
    <property type="match status" value="1"/>
</dbReference>
<dbReference type="Pfam" id="PF03626">
    <property type="entry name" value="COX4_pro"/>
    <property type="match status" value="1"/>
</dbReference>